<keyword id="KW-0408">Iron</keyword>
<keyword id="KW-1185">Reference proteome</keyword>
<gene>
    <name type="ordered locus">HCH_01339</name>
</gene>
<dbReference type="EMBL" id="CP000155">
    <property type="protein sequence ID" value="ABC28206.1"/>
    <property type="molecule type" value="Genomic_DNA"/>
</dbReference>
<dbReference type="RefSeq" id="WP_011395279.1">
    <property type="nucleotide sequence ID" value="NC_007645.1"/>
</dbReference>
<dbReference type="SMR" id="Q2SMB8"/>
<dbReference type="STRING" id="349521.HCH_01339"/>
<dbReference type="KEGG" id="hch:HCH_01339"/>
<dbReference type="eggNOG" id="COG2924">
    <property type="taxonomic scope" value="Bacteria"/>
</dbReference>
<dbReference type="HOGENOM" id="CLU_170994_0_0_6"/>
<dbReference type="OrthoDB" id="9804318at2"/>
<dbReference type="Proteomes" id="UP000000238">
    <property type="component" value="Chromosome"/>
</dbReference>
<dbReference type="GO" id="GO:0005829">
    <property type="term" value="C:cytosol"/>
    <property type="evidence" value="ECO:0007669"/>
    <property type="project" value="TreeGrafter"/>
</dbReference>
<dbReference type="GO" id="GO:0005506">
    <property type="term" value="F:iron ion binding"/>
    <property type="evidence" value="ECO:0007669"/>
    <property type="project" value="UniProtKB-UniRule"/>
</dbReference>
<dbReference type="GO" id="GO:0034599">
    <property type="term" value="P:cellular response to oxidative stress"/>
    <property type="evidence" value="ECO:0007669"/>
    <property type="project" value="TreeGrafter"/>
</dbReference>
<dbReference type="FunFam" id="1.10.3880.10:FF:000001">
    <property type="entry name" value="Probable Fe(2+)-trafficking protein"/>
    <property type="match status" value="1"/>
</dbReference>
<dbReference type="Gene3D" id="1.10.3880.10">
    <property type="entry name" value="Fe(II) trafficking protein YggX"/>
    <property type="match status" value="1"/>
</dbReference>
<dbReference type="HAMAP" id="MF_00686">
    <property type="entry name" value="Fe_traffic_YggX"/>
    <property type="match status" value="1"/>
</dbReference>
<dbReference type="InterPro" id="IPR007457">
    <property type="entry name" value="Fe_traffick_prot_YggX"/>
</dbReference>
<dbReference type="InterPro" id="IPR036766">
    <property type="entry name" value="Fe_traffick_prot_YggX_sf"/>
</dbReference>
<dbReference type="NCBIfam" id="NF003817">
    <property type="entry name" value="PRK05408.1"/>
    <property type="match status" value="1"/>
</dbReference>
<dbReference type="PANTHER" id="PTHR36965">
    <property type="entry name" value="FE(2+)-TRAFFICKING PROTEIN-RELATED"/>
    <property type="match status" value="1"/>
</dbReference>
<dbReference type="PANTHER" id="PTHR36965:SF1">
    <property type="entry name" value="FE(2+)-TRAFFICKING PROTEIN-RELATED"/>
    <property type="match status" value="1"/>
</dbReference>
<dbReference type="Pfam" id="PF04362">
    <property type="entry name" value="Iron_traffic"/>
    <property type="match status" value="1"/>
</dbReference>
<dbReference type="PIRSF" id="PIRSF029827">
    <property type="entry name" value="Fe_traffic_YggX"/>
    <property type="match status" value="1"/>
</dbReference>
<dbReference type="SUPFAM" id="SSF111148">
    <property type="entry name" value="YggX-like"/>
    <property type="match status" value="1"/>
</dbReference>
<comment type="function">
    <text evidence="1">Could be a mediator in iron transactions between iron acquisition and iron-requiring processes, such as synthesis and/or repair of Fe-S clusters in biosynthetic enzymes.</text>
</comment>
<comment type="similarity">
    <text evidence="1">Belongs to the Fe(2+)-trafficking protein family.</text>
</comment>
<proteinExistence type="inferred from homology"/>
<sequence length="89" mass="10466">MARMVFCKKYQQELEGLALPPMPGARGKELFETVSKKAWQEWLQHQTMLINEKRLNLMDPDARTYLTEQMEKFLNNENFDAAEGFVPKD</sequence>
<name>FETP_HAHCH</name>
<accession>Q2SMB8</accession>
<evidence type="ECO:0000255" key="1">
    <source>
        <dbReference type="HAMAP-Rule" id="MF_00686"/>
    </source>
</evidence>
<reference key="1">
    <citation type="journal article" date="2005" name="Nucleic Acids Res.">
        <title>Genomic blueprint of Hahella chejuensis, a marine microbe producing an algicidal agent.</title>
        <authorList>
            <person name="Jeong H."/>
            <person name="Yim J.H."/>
            <person name="Lee C."/>
            <person name="Choi S.-H."/>
            <person name="Park Y.K."/>
            <person name="Yoon S.H."/>
            <person name="Hur C.-G."/>
            <person name="Kang H.-Y."/>
            <person name="Kim D."/>
            <person name="Lee H.H."/>
            <person name="Park K.H."/>
            <person name="Park S.-H."/>
            <person name="Park H.-S."/>
            <person name="Lee H.K."/>
            <person name="Oh T.K."/>
            <person name="Kim J.F."/>
        </authorList>
    </citation>
    <scope>NUCLEOTIDE SEQUENCE [LARGE SCALE GENOMIC DNA]</scope>
    <source>
        <strain>KCTC 2396</strain>
    </source>
</reference>
<feature type="chain" id="PRO_0000246102" description="Probable Fe(2+)-trafficking protein">
    <location>
        <begin position="1"/>
        <end position="89"/>
    </location>
</feature>
<organism>
    <name type="scientific">Hahella chejuensis (strain KCTC 2396)</name>
    <dbReference type="NCBI Taxonomy" id="349521"/>
    <lineage>
        <taxon>Bacteria</taxon>
        <taxon>Pseudomonadati</taxon>
        <taxon>Pseudomonadota</taxon>
        <taxon>Gammaproteobacteria</taxon>
        <taxon>Oceanospirillales</taxon>
        <taxon>Hahellaceae</taxon>
        <taxon>Hahella</taxon>
    </lineage>
</organism>
<protein>
    <recommendedName>
        <fullName evidence="1">Probable Fe(2+)-trafficking protein</fullName>
    </recommendedName>
</protein>